<reference key="1">
    <citation type="journal article" date="2006" name="J. Bacteriol.">
        <title>Chromosome rearrangement and diversification of Francisella tularensis revealed by the type B (OSU18) genome sequence.</title>
        <authorList>
            <person name="Petrosino J.F."/>
            <person name="Xiang Q."/>
            <person name="Karpathy S.E."/>
            <person name="Jiang H."/>
            <person name="Yerrapragada S."/>
            <person name="Liu Y."/>
            <person name="Gioia J."/>
            <person name="Hemphill L."/>
            <person name="Gonzalez A."/>
            <person name="Raghavan T.M."/>
            <person name="Uzman A."/>
            <person name="Fox G.E."/>
            <person name="Highlander S."/>
            <person name="Reichard M."/>
            <person name="Morton R.J."/>
            <person name="Clinkenbeard K.D."/>
            <person name="Weinstock G.M."/>
        </authorList>
    </citation>
    <scope>NUCLEOTIDE SEQUENCE [LARGE SCALE GENOMIC DNA]</scope>
    <source>
        <strain>OSU18</strain>
    </source>
</reference>
<sequence>MNNYIFIISAPSGAGKSSLLKAFLATDIGKDNYAVAISHTTREPRVGEINSREYYFVTVAEFEQLLSQDGFIEYAKVFKNYYGTSKAELDRLLALGKNIILEINWQGAQQTRAIYGDRAKSIFILPPSLDELRKRLEKRNTDSKETIDYRMEQVQSEISHADEYDYLLVNDDFSQSLEQLCKYFEQNIQS</sequence>
<proteinExistence type="inferred from homology"/>
<feature type="chain" id="PRO_0000266326" description="Guanylate kinase">
    <location>
        <begin position="1"/>
        <end position="190"/>
    </location>
</feature>
<feature type="domain" description="Guanylate kinase-like" evidence="1">
    <location>
        <begin position="3"/>
        <end position="185"/>
    </location>
</feature>
<feature type="binding site" evidence="1">
    <location>
        <begin position="10"/>
        <end position="17"/>
    </location>
    <ligand>
        <name>ATP</name>
        <dbReference type="ChEBI" id="CHEBI:30616"/>
    </ligand>
</feature>
<keyword id="KW-0067">ATP-binding</keyword>
<keyword id="KW-0963">Cytoplasm</keyword>
<keyword id="KW-0418">Kinase</keyword>
<keyword id="KW-0547">Nucleotide-binding</keyword>
<keyword id="KW-0808">Transferase</keyword>
<comment type="function">
    <text evidence="1">Essential for recycling GMP and indirectly, cGMP.</text>
</comment>
<comment type="catalytic activity">
    <reaction evidence="1">
        <text>GMP + ATP = GDP + ADP</text>
        <dbReference type="Rhea" id="RHEA:20780"/>
        <dbReference type="ChEBI" id="CHEBI:30616"/>
        <dbReference type="ChEBI" id="CHEBI:58115"/>
        <dbReference type="ChEBI" id="CHEBI:58189"/>
        <dbReference type="ChEBI" id="CHEBI:456216"/>
        <dbReference type="EC" id="2.7.4.8"/>
    </reaction>
</comment>
<comment type="subcellular location">
    <subcellularLocation>
        <location evidence="1">Cytoplasm</location>
    </subcellularLocation>
</comment>
<comment type="similarity">
    <text evidence="1">Belongs to the guanylate kinase family.</text>
</comment>
<organism>
    <name type="scientific">Francisella tularensis subsp. holarctica (strain OSU18)</name>
    <dbReference type="NCBI Taxonomy" id="393011"/>
    <lineage>
        <taxon>Bacteria</taxon>
        <taxon>Pseudomonadati</taxon>
        <taxon>Pseudomonadota</taxon>
        <taxon>Gammaproteobacteria</taxon>
        <taxon>Thiotrichales</taxon>
        <taxon>Francisellaceae</taxon>
        <taxon>Francisella</taxon>
    </lineage>
</organism>
<accession>Q0BL54</accession>
<dbReference type="EC" id="2.7.4.8" evidence="1"/>
<dbReference type="EMBL" id="CP000437">
    <property type="protein sequence ID" value="ABI83180.1"/>
    <property type="molecule type" value="Genomic_DNA"/>
</dbReference>
<dbReference type="RefSeq" id="WP_011648735.1">
    <property type="nucleotide sequence ID" value="NC_017463.1"/>
</dbReference>
<dbReference type="SMR" id="Q0BL54"/>
<dbReference type="KEGG" id="fth:FTH_1353"/>
<dbReference type="GO" id="GO:0005829">
    <property type="term" value="C:cytosol"/>
    <property type="evidence" value="ECO:0007669"/>
    <property type="project" value="TreeGrafter"/>
</dbReference>
<dbReference type="GO" id="GO:0005524">
    <property type="term" value="F:ATP binding"/>
    <property type="evidence" value="ECO:0007669"/>
    <property type="project" value="UniProtKB-UniRule"/>
</dbReference>
<dbReference type="GO" id="GO:0004385">
    <property type="term" value="F:guanylate kinase activity"/>
    <property type="evidence" value="ECO:0007669"/>
    <property type="project" value="UniProtKB-UniRule"/>
</dbReference>
<dbReference type="CDD" id="cd00071">
    <property type="entry name" value="GMPK"/>
    <property type="match status" value="1"/>
</dbReference>
<dbReference type="FunFam" id="3.30.63.10:FF:000005">
    <property type="entry name" value="Guanylate kinase"/>
    <property type="match status" value="1"/>
</dbReference>
<dbReference type="Gene3D" id="3.30.63.10">
    <property type="entry name" value="Guanylate Kinase phosphate binding domain"/>
    <property type="match status" value="1"/>
</dbReference>
<dbReference type="Gene3D" id="3.40.50.300">
    <property type="entry name" value="P-loop containing nucleotide triphosphate hydrolases"/>
    <property type="match status" value="1"/>
</dbReference>
<dbReference type="HAMAP" id="MF_00328">
    <property type="entry name" value="Guanylate_kinase"/>
    <property type="match status" value="1"/>
</dbReference>
<dbReference type="InterPro" id="IPR008145">
    <property type="entry name" value="GK/Ca_channel_bsu"/>
</dbReference>
<dbReference type="InterPro" id="IPR008144">
    <property type="entry name" value="Guanylate_kin-like_dom"/>
</dbReference>
<dbReference type="InterPro" id="IPR017665">
    <property type="entry name" value="Guanylate_kinase"/>
</dbReference>
<dbReference type="InterPro" id="IPR027417">
    <property type="entry name" value="P-loop_NTPase"/>
</dbReference>
<dbReference type="NCBIfam" id="TIGR03263">
    <property type="entry name" value="guanyl_kin"/>
    <property type="match status" value="1"/>
</dbReference>
<dbReference type="PANTHER" id="PTHR23117:SF13">
    <property type="entry name" value="GUANYLATE KINASE"/>
    <property type="match status" value="1"/>
</dbReference>
<dbReference type="PANTHER" id="PTHR23117">
    <property type="entry name" value="GUANYLATE KINASE-RELATED"/>
    <property type="match status" value="1"/>
</dbReference>
<dbReference type="Pfam" id="PF00625">
    <property type="entry name" value="Guanylate_kin"/>
    <property type="match status" value="1"/>
</dbReference>
<dbReference type="SMART" id="SM00072">
    <property type="entry name" value="GuKc"/>
    <property type="match status" value="1"/>
</dbReference>
<dbReference type="SUPFAM" id="SSF52540">
    <property type="entry name" value="P-loop containing nucleoside triphosphate hydrolases"/>
    <property type="match status" value="1"/>
</dbReference>
<dbReference type="PROSITE" id="PS50052">
    <property type="entry name" value="GUANYLATE_KINASE_2"/>
    <property type="match status" value="1"/>
</dbReference>
<name>KGUA_FRATO</name>
<evidence type="ECO:0000255" key="1">
    <source>
        <dbReference type="HAMAP-Rule" id="MF_00328"/>
    </source>
</evidence>
<gene>
    <name evidence="1" type="primary">gmk</name>
    <name type="ordered locus">FTH_1353</name>
</gene>
<protein>
    <recommendedName>
        <fullName evidence="1">Guanylate kinase</fullName>
        <ecNumber evidence="1">2.7.4.8</ecNumber>
    </recommendedName>
    <alternativeName>
        <fullName evidence="1">GMP kinase</fullName>
    </alternativeName>
</protein>